<name>DSO2_DROME</name>
<dbReference type="EMBL" id="AE013599">
    <property type="protein sequence ID" value="ABC66114.1"/>
    <property type="molecule type" value="Genomic_DNA"/>
</dbReference>
<dbReference type="EMBL" id="BT100325">
    <property type="protein sequence ID" value="ACZ61124.1"/>
    <property type="molecule type" value="mRNA"/>
</dbReference>
<dbReference type="EMBL" id="KX532099">
    <property type="protein sequence ID" value="ANY27909.1"/>
    <property type="molecule type" value="mRNA"/>
</dbReference>
<dbReference type="RefSeq" id="NP_001033962.1">
    <property type="nucleotide sequence ID" value="NM_001038873.2"/>
</dbReference>
<dbReference type="BioGRID" id="566827">
    <property type="interactions" value="1"/>
</dbReference>
<dbReference type="FunCoup" id="P83869">
    <property type="interactions" value="21"/>
</dbReference>
<dbReference type="STRING" id="7227.FBpp0099553"/>
<dbReference type="PaxDb" id="7227-FBpp0099553"/>
<dbReference type="DNASU" id="3885603"/>
<dbReference type="EnsemblMetazoa" id="FBtr0100038">
    <property type="protein sequence ID" value="FBpp0099553"/>
    <property type="gene ID" value="FBgn0067905"/>
</dbReference>
<dbReference type="GeneID" id="3885603"/>
<dbReference type="KEGG" id="dme:Dmel_CG33990"/>
<dbReference type="AGR" id="FB:FBgn0067905"/>
<dbReference type="CTD" id="3885603"/>
<dbReference type="FlyBase" id="FBgn0067905">
    <property type="gene designation" value="Dso2"/>
</dbReference>
<dbReference type="VEuPathDB" id="VectorBase:FBgn0067905"/>
<dbReference type="HOGENOM" id="CLU_3191859_0_0_1"/>
<dbReference type="InParanoid" id="P83869"/>
<dbReference type="PhylomeDB" id="P83869"/>
<dbReference type="BioGRID-ORCS" id="3885603">
    <property type="hits" value="0 hits in 1 CRISPR screen"/>
</dbReference>
<dbReference type="GenomeRNAi" id="3885603"/>
<dbReference type="PRO" id="PR:P83869"/>
<dbReference type="Proteomes" id="UP000000803">
    <property type="component" value="Chromosome 2R"/>
</dbReference>
<dbReference type="Bgee" id="FBgn0067905">
    <property type="expression patterns" value="Expressed in visual pigment cell (sensu Nematoda and Protostomia) in testis and 140 other cell types or tissues"/>
</dbReference>
<dbReference type="ExpressionAtlas" id="P83869">
    <property type="expression patterns" value="baseline and differential"/>
</dbReference>
<dbReference type="GO" id="GO:0005576">
    <property type="term" value="C:extracellular region"/>
    <property type="evidence" value="ECO:0000314"/>
    <property type="project" value="FlyBase"/>
</dbReference>
<dbReference type="GO" id="GO:0005615">
    <property type="term" value="C:extracellular space"/>
    <property type="evidence" value="ECO:0000314"/>
    <property type="project" value="UniProtKB"/>
</dbReference>
<dbReference type="GO" id="GO:0019732">
    <property type="term" value="P:antifungal humoral response"/>
    <property type="evidence" value="ECO:0000314"/>
    <property type="project" value="UniProtKB"/>
</dbReference>
<dbReference type="GO" id="GO:0006952">
    <property type="term" value="P:defense response"/>
    <property type="evidence" value="ECO:0000314"/>
    <property type="project" value="FlyBase"/>
</dbReference>
<dbReference type="GO" id="GO:0045087">
    <property type="term" value="P:innate immune response"/>
    <property type="evidence" value="ECO:0007669"/>
    <property type="project" value="UniProtKB-KW"/>
</dbReference>
<dbReference type="GO" id="GO:0009617">
    <property type="term" value="P:response to bacterium"/>
    <property type="evidence" value="ECO:0007007"/>
    <property type="project" value="FlyBase"/>
</dbReference>
<feature type="signal peptide" evidence="1">
    <location>
        <begin position="1"/>
        <end position="22"/>
    </location>
</feature>
<feature type="peptide" id="PRO_0000021505" description="Daisho2">
    <location>
        <begin position="23"/>
        <end position="46"/>
    </location>
</feature>
<accession>P83869</accession>
<accession>D1Z361</accession>
<accession>Q2PE21</accession>
<gene>
    <name evidence="5 11" type="primary">Dso2</name>
    <name evidence="4" type="synonym">IM14</name>
    <name evidence="11" type="ORF">CG33990</name>
</gene>
<comment type="function">
    <text evidence="2">Peptide which plays a role in the humoral immune response to a subset of filamentous fungi, including F.oxysporum and F.verticillioides.</text>
</comment>
<comment type="subcellular location">
    <subcellularLocation>
        <location evidence="1 2 3">Secreted</location>
    </subcellularLocation>
</comment>
<comment type="tissue specificity">
    <text evidence="1 2 3">Hemolymph (at protein level).</text>
</comment>
<comment type="developmental stage">
    <text evidence="1">Adult.</text>
</comment>
<comment type="induction">
    <text evidence="1 2 3">By bacterial and fungal infection (at protein level) (PubMed:14645501, PubMed:32038657, PubMed:9736738). Detected within 24 hours of bacterial infection (at protein level) (PubMed:14645501, PubMed:9736738). Induced by Gram-positive bacteria M.luteus (at protein level) (PubMed:32038657).</text>
</comment>
<comment type="mass spectrometry"/>
<comment type="mass spectrometry"/>
<comment type="disruption phenotype">
    <text evidence="2">Adult males infected with spores from F.oxysporum or F.verticillioides display reduced survival.</text>
</comment>
<comment type="miscellaneous">
    <text evidence="5">'Daisho' is the Japanese term for a matched pair of samurai swords, one short and one long, and refers to the role of the two Daisho peptides (Dso1 and Dso2) in defense against fungal infection.</text>
</comment>
<keyword id="KW-0903">Direct protein sequencing</keyword>
<keyword id="KW-0391">Immunity</keyword>
<keyword id="KW-0399">Innate immunity</keyword>
<keyword id="KW-1185">Reference proteome</keyword>
<keyword id="KW-0964">Secreted</keyword>
<keyword id="KW-0732">Signal</keyword>
<reference key="1">
    <citation type="journal article" date="2000" name="Science">
        <title>The genome sequence of Drosophila melanogaster.</title>
        <authorList>
            <person name="Adams M.D."/>
            <person name="Celniker S.E."/>
            <person name="Holt R.A."/>
            <person name="Evans C.A."/>
            <person name="Gocayne J.D."/>
            <person name="Amanatides P.G."/>
            <person name="Scherer S.E."/>
            <person name="Li P.W."/>
            <person name="Hoskins R.A."/>
            <person name="Galle R.F."/>
            <person name="George R.A."/>
            <person name="Lewis S.E."/>
            <person name="Richards S."/>
            <person name="Ashburner M."/>
            <person name="Henderson S.N."/>
            <person name="Sutton G.G."/>
            <person name="Wortman J.R."/>
            <person name="Yandell M.D."/>
            <person name="Zhang Q."/>
            <person name="Chen L.X."/>
            <person name="Brandon R.C."/>
            <person name="Rogers Y.-H.C."/>
            <person name="Blazej R.G."/>
            <person name="Champe M."/>
            <person name="Pfeiffer B.D."/>
            <person name="Wan K.H."/>
            <person name="Doyle C."/>
            <person name="Baxter E.G."/>
            <person name="Helt G."/>
            <person name="Nelson C.R."/>
            <person name="Miklos G.L.G."/>
            <person name="Abril J.F."/>
            <person name="Agbayani A."/>
            <person name="An H.-J."/>
            <person name="Andrews-Pfannkoch C."/>
            <person name="Baldwin D."/>
            <person name="Ballew R.M."/>
            <person name="Basu A."/>
            <person name="Baxendale J."/>
            <person name="Bayraktaroglu L."/>
            <person name="Beasley E.M."/>
            <person name="Beeson K.Y."/>
            <person name="Benos P.V."/>
            <person name="Berman B.P."/>
            <person name="Bhandari D."/>
            <person name="Bolshakov S."/>
            <person name="Borkova D."/>
            <person name="Botchan M.R."/>
            <person name="Bouck J."/>
            <person name="Brokstein P."/>
            <person name="Brottier P."/>
            <person name="Burtis K.C."/>
            <person name="Busam D.A."/>
            <person name="Butler H."/>
            <person name="Cadieu E."/>
            <person name="Center A."/>
            <person name="Chandra I."/>
            <person name="Cherry J.M."/>
            <person name="Cawley S."/>
            <person name="Dahlke C."/>
            <person name="Davenport L.B."/>
            <person name="Davies P."/>
            <person name="de Pablos B."/>
            <person name="Delcher A."/>
            <person name="Deng Z."/>
            <person name="Mays A.D."/>
            <person name="Dew I."/>
            <person name="Dietz S.M."/>
            <person name="Dodson K."/>
            <person name="Doup L.E."/>
            <person name="Downes M."/>
            <person name="Dugan-Rocha S."/>
            <person name="Dunkov B.C."/>
            <person name="Dunn P."/>
            <person name="Durbin K.J."/>
            <person name="Evangelista C.C."/>
            <person name="Ferraz C."/>
            <person name="Ferriera S."/>
            <person name="Fleischmann W."/>
            <person name="Fosler C."/>
            <person name="Gabrielian A.E."/>
            <person name="Garg N.S."/>
            <person name="Gelbart W.M."/>
            <person name="Glasser K."/>
            <person name="Glodek A."/>
            <person name="Gong F."/>
            <person name="Gorrell J.H."/>
            <person name="Gu Z."/>
            <person name="Guan P."/>
            <person name="Harris M."/>
            <person name="Harris N.L."/>
            <person name="Harvey D.A."/>
            <person name="Heiman T.J."/>
            <person name="Hernandez J.R."/>
            <person name="Houck J."/>
            <person name="Hostin D."/>
            <person name="Houston K.A."/>
            <person name="Howland T.J."/>
            <person name="Wei M.-H."/>
            <person name="Ibegwam C."/>
            <person name="Jalali M."/>
            <person name="Kalush F."/>
            <person name="Karpen G.H."/>
            <person name="Ke Z."/>
            <person name="Kennison J.A."/>
            <person name="Ketchum K.A."/>
            <person name="Kimmel B.E."/>
            <person name="Kodira C.D."/>
            <person name="Kraft C.L."/>
            <person name="Kravitz S."/>
            <person name="Kulp D."/>
            <person name="Lai Z."/>
            <person name="Lasko P."/>
            <person name="Lei Y."/>
            <person name="Levitsky A.A."/>
            <person name="Li J.H."/>
            <person name="Li Z."/>
            <person name="Liang Y."/>
            <person name="Lin X."/>
            <person name="Liu X."/>
            <person name="Mattei B."/>
            <person name="McIntosh T.C."/>
            <person name="McLeod M.P."/>
            <person name="McPherson D."/>
            <person name="Merkulov G."/>
            <person name="Milshina N.V."/>
            <person name="Mobarry C."/>
            <person name="Morris J."/>
            <person name="Moshrefi A."/>
            <person name="Mount S.M."/>
            <person name="Moy M."/>
            <person name="Murphy B."/>
            <person name="Murphy L."/>
            <person name="Muzny D.M."/>
            <person name="Nelson D.L."/>
            <person name="Nelson D.R."/>
            <person name="Nelson K.A."/>
            <person name="Nixon K."/>
            <person name="Nusskern D.R."/>
            <person name="Pacleb J.M."/>
            <person name="Palazzolo M."/>
            <person name="Pittman G.S."/>
            <person name="Pan S."/>
            <person name="Pollard J."/>
            <person name="Puri V."/>
            <person name="Reese M.G."/>
            <person name="Reinert K."/>
            <person name="Remington K."/>
            <person name="Saunders R.D.C."/>
            <person name="Scheeler F."/>
            <person name="Shen H."/>
            <person name="Shue B.C."/>
            <person name="Siden-Kiamos I."/>
            <person name="Simpson M."/>
            <person name="Skupski M.P."/>
            <person name="Smith T.J."/>
            <person name="Spier E."/>
            <person name="Spradling A.C."/>
            <person name="Stapleton M."/>
            <person name="Strong R."/>
            <person name="Sun E."/>
            <person name="Svirskas R."/>
            <person name="Tector C."/>
            <person name="Turner R."/>
            <person name="Venter E."/>
            <person name="Wang A.H."/>
            <person name="Wang X."/>
            <person name="Wang Z.-Y."/>
            <person name="Wassarman D.A."/>
            <person name="Weinstock G.M."/>
            <person name="Weissenbach J."/>
            <person name="Williams S.M."/>
            <person name="Woodage T."/>
            <person name="Worley K.C."/>
            <person name="Wu D."/>
            <person name="Yang S."/>
            <person name="Yao Q.A."/>
            <person name="Ye J."/>
            <person name="Yeh R.-F."/>
            <person name="Zaveri J.S."/>
            <person name="Zhan M."/>
            <person name="Zhang G."/>
            <person name="Zhao Q."/>
            <person name="Zheng L."/>
            <person name="Zheng X.H."/>
            <person name="Zhong F.N."/>
            <person name="Zhong W."/>
            <person name="Zhou X."/>
            <person name="Zhu S.C."/>
            <person name="Zhu X."/>
            <person name="Smith H.O."/>
            <person name="Gibbs R.A."/>
            <person name="Myers E.W."/>
            <person name="Rubin G.M."/>
            <person name="Venter J.C."/>
        </authorList>
    </citation>
    <scope>NUCLEOTIDE SEQUENCE [LARGE SCALE GENOMIC DNA]</scope>
    <source>
        <strain>Berkeley</strain>
    </source>
</reference>
<reference key="2">
    <citation type="journal article" date="2002" name="Genome Biol.">
        <title>Annotation of the Drosophila melanogaster euchromatic genome: a systematic review.</title>
        <authorList>
            <person name="Misra S."/>
            <person name="Crosby M.A."/>
            <person name="Mungall C.J."/>
            <person name="Matthews B.B."/>
            <person name="Campbell K.S."/>
            <person name="Hradecky P."/>
            <person name="Huang Y."/>
            <person name="Kaminker J.S."/>
            <person name="Millburn G.H."/>
            <person name="Prochnik S.E."/>
            <person name="Smith C.D."/>
            <person name="Tupy J.L."/>
            <person name="Whitfield E.J."/>
            <person name="Bayraktaroglu L."/>
            <person name="Berman B.P."/>
            <person name="Bettencourt B.R."/>
            <person name="Celniker S.E."/>
            <person name="de Grey A.D.N.J."/>
            <person name="Drysdale R.A."/>
            <person name="Harris N.L."/>
            <person name="Richter J."/>
            <person name="Russo S."/>
            <person name="Schroeder A.J."/>
            <person name="Shu S.Q."/>
            <person name="Stapleton M."/>
            <person name="Yamada C."/>
            <person name="Ashburner M."/>
            <person name="Gelbart W.M."/>
            <person name="Rubin G.M."/>
            <person name="Lewis S.E."/>
        </authorList>
    </citation>
    <scope>GENOME REANNOTATION</scope>
    <source>
        <strain>Berkeley</strain>
    </source>
</reference>
<reference evidence="9 10" key="3">
    <citation type="submission" date="2016-07" db="EMBL/GenBank/DDBJ databases">
        <authorList>
            <person name="Carlson J."/>
            <person name="Frise E."/>
            <person name="Park S."/>
            <person name="Wan K."/>
            <person name="Yu C."/>
            <person name="Wan K."/>
            <person name="Booth B."/>
            <person name="Spirohn K."/>
            <person name="Hao T."/>
            <person name="Hu Y."/>
            <person name="Calderwood M."/>
            <person name="Hill D."/>
            <person name="Mohr S."/>
            <person name="Vidal M."/>
            <person name="Celniker S."/>
            <person name="Perrimon N."/>
        </authorList>
    </citation>
    <scope>NUCLEOTIDE SEQUENCE [LARGE SCALE MRNA]</scope>
</reference>
<reference key="4">
    <citation type="journal article" date="2004" name="Mol. Cell. Proteomics">
        <title>Proteomic analysis of the systemic immune response of Drosophila.</title>
        <authorList>
            <person name="Levy F."/>
            <person name="Bulet P."/>
            <person name="Ehret-Sabatier L."/>
        </authorList>
    </citation>
    <scope>PROTEIN SEQUENCE OF 23-46</scope>
    <scope>SUBCELLULAR LOCATION</scope>
    <scope>TISSUE SPECIFICITY</scope>
    <scope>DEVELOPMENTAL STAGE</scope>
    <scope>MASS SPECTROMETRY</scope>
    <scope>INDUCTION</scope>
    <source>
        <strain evidence="4">Oregon-R</strain>
        <tissue evidence="4">Hemolymph</tissue>
    </source>
</reference>
<reference evidence="7" key="5">
    <citation type="journal article" date="1998" name="Proc. Natl. Acad. Sci. U.S.A.">
        <title>Differential display of peptides induced during the immune response of Drosophila: a matrix-assisted laser desorption ionization time-of-flight mass spectrometry study.</title>
        <authorList>
            <person name="Uttenweiler-Joseph S."/>
            <person name="Moniatte M."/>
            <person name="Lagueux M."/>
            <person name="van Dorsselaer A."/>
            <person name="Hoffmann J.A."/>
            <person name="Bulet P."/>
        </authorList>
    </citation>
    <scope>TISSUE SPECIFICITY</scope>
    <scope>SUBCELLULAR LOCATION</scope>
    <scope>INDUCTION BY BACTERIA</scope>
    <scope>IDENTIFICATION BY MASS SPECTROMETRY</scope>
    <source>
        <strain evidence="6">Oregon-R</strain>
        <tissue evidence="6">Hemolymph</tissue>
    </source>
</reference>
<reference key="6">
    <citation type="journal article" date="2020" name="Front. Immunol.">
        <title>The Daisho Peptides Mediate Drosophila Defense Against a Subset of Filamentous Fungi.</title>
        <authorList>
            <person name="Cohen L.B."/>
            <person name="Lindsay S.A."/>
            <person name="Xu Y."/>
            <person name="Lin S.J.H."/>
            <person name="Wasserman S.A."/>
        </authorList>
    </citation>
    <scope>FUNCTION</scope>
    <scope>SUBCELLULAR LOCATION</scope>
    <scope>TISSUE SPECIFICITY</scope>
    <scope>INDUCTION BY BACTERIA</scope>
    <scope>MASS SPECTROMETRY</scope>
    <scope>DISRUPTION PHENOTYPE</scope>
</reference>
<protein>
    <recommendedName>
        <fullName evidence="5">Daisho2</fullName>
    </recommendedName>
    <alternativeName>
        <fullName evidence="4">Immune-induced peptide 14</fullName>
        <shortName evidence="8">DIM-14</shortName>
        <shortName evidence="6">DIM4</shortName>
    </alternativeName>
</protein>
<organism evidence="7">
    <name type="scientific">Drosophila melanogaster</name>
    <name type="common">Fruit fly</name>
    <dbReference type="NCBI Taxonomy" id="7227"/>
    <lineage>
        <taxon>Eukaryota</taxon>
        <taxon>Metazoa</taxon>
        <taxon>Ecdysozoa</taxon>
        <taxon>Arthropoda</taxon>
        <taxon>Hexapoda</taxon>
        <taxon>Insecta</taxon>
        <taxon>Pterygota</taxon>
        <taxon>Neoptera</taxon>
        <taxon>Endopterygota</taxon>
        <taxon>Diptera</taxon>
        <taxon>Brachycera</taxon>
        <taxon>Muscomorpha</taxon>
        <taxon>Ephydroidea</taxon>
        <taxon>Drosophilidae</taxon>
        <taxon>Drosophila</taxon>
        <taxon>Sophophora</taxon>
    </lineage>
</organism>
<proteinExistence type="evidence at protein level"/>
<sequence>MNCLKICGFFFALIAALATAEAGTQVIHAGGHTLIQTDRSQYIRKN</sequence>
<evidence type="ECO:0000269" key="1">
    <source>
    </source>
</evidence>
<evidence type="ECO:0000269" key="2">
    <source>
    </source>
</evidence>
<evidence type="ECO:0000269" key="3">
    <source>
    </source>
</evidence>
<evidence type="ECO:0000303" key="4">
    <source>
    </source>
</evidence>
<evidence type="ECO:0000303" key="5">
    <source>
    </source>
</evidence>
<evidence type="ECO:0000303" key="6">
    <source>
    </source>
</evidence>
<evidence type="ECO:0000305" key="7"/>
<evidence type="ECO:0000305" key="8">
    <source>
    </source>
</evidence>
<evidence type="ECO:0000312" key="9">
    <source>
        <dbReference type="EMBL" id="ACZ61124.1"/>
    </source>
</evidence>
<evidence type="ECO:0000312" key="10">
    <source>
        <dbReference type="EMBL" id="ANY27909.1"/>
    </source>
</evidence>
<evidence type="ECO:0000312" key="11">
    <source>
        <dbReference type="FlyBase" id="FBgn0067905"/>
    </source>
</evidence>